<organism>
    <name type="scientific">Shigella sonnei (strain Ss046)</name>
    <dbReference type="NCBI Taxonomy" id="300269"/>
    <lineage>
        <taxon>Bacteria</taxon>
        <taxon>Pseudomonadati</taxon>
        <taxon>Pseudomonadota</taxon>
        <taxon>Gammaproteobacteria</taxon>
        <taxon>Enterobacterales</taxon>
        <taxon>Enterobacteriaceae</taxon>
        <taxon>Shigella</taxon>
    </lineage>
</organism>
<proteinExistence type="inferred from homology"/>
<name>MHPA_SHISS</name>
<dbReference type="EC" id="1.14.13.127" evidence="1"/>
<dbReference type="EMBL" id="CP000038">
    <property type="protein sequence ID" value="AAZ87077.1"/>
    <property type="molecule type" value="Genomic_DNA"/>
</dbReference>
<dbReference type="RefSeq" id="WP_001007450.1">
    <property type="nucleotide sequence ID" value="NC_007384.1"/>
</dbReference>
<dbReference type="SMR" id="Q3Z585"/>
<dbReference type="KEGG" id="ssn:SSON_0297"/>
<dbReference type="HOGENOM" id="CLU_009665_20_2_6"/>
<dbReference type="UniPathway" id="UPA00714"/>
<dbReference type="Proteomes" id="UP000002529">
    <property type="component" value="Chromosome"/>
</dbReference>
<dbReference type="GO" id="GO:0008688">
    <property type="term" value="F:3-(3-hydroxyphenyl)propionate hydroxylase activity"/>
    <property type="evidence" value="ECO:0007669"/>
    <property type="project" value="UniProtKB-UniRule"/>
</dbReference>
<dbReference type="GO" id="GO:0071949">
    <property type="term" value="F:FAD binding"/>
    <property type="evidence" value="ECO:0007669"/>
    <property type="project" value="InterPro"/>
</dbReference>
<dbReference type="GO" id="GO:0019622">
    <property type="term" value="P:3-(3-hydroxy)phenylpropionate catabolic process"/>
    <property type="evidence" value="ECO:0007669"/>
    <property type="project" value="UniProtKB-UniRule"/>
</dbReference>
<dbReference type="GO" id="GO:0019380">
    <property type="term" value="P:3-phenylpropionate catabolic process"/>
    <property type="evidence" value="ECO:0007669"/>
    <property type="project" value="UniProtKB-UniPathway"/>
</dbReference>
<dbReference type="FunFam" id="3.30.70.2450:FF:000001">
    <property type="entry name" value="3-(3-hydroxy-phenyl)propionate/3-hydroxycinnamic acid hydroxylase"/>
    <property type="match status" value="1"/>
</dbReference>
<dbReference type="FunFam" id="3.50.50.60:FF:000126">
    <property type="entry name" value="3-(3-hydroxy-phenyl)propionate/3-hydroxycinnamic acid hydroxylase"/>
    <property type="match status" value="1"/>
</dbReference>
<dbReference type="Gene3D" id="3.30.70.2450">
    <property type="match status" value="1"/>
</dbReference>
<dbReference type="Gene3D" id="3.50.50.60">
    <property type="entry name" value="FAD/NAD(P)-binding domain"/>
    <property type="match status" value="1"/>
</dbReference>
<dbReference type="HAMAP" id="MF_01652">
    <property type="entry name" value="MhpA"/>
    <property type="match status" value="1"/>
</dbReference>
<dbReference type="InterPro" id="IPR023786">
    <property type="entry name" value="3-HPP/3HCI_hydroxylase"/>
</dbReference>
<dbReference type="InterPro" id="IPR002938">
    <property type="entry name" value="FAD-bd"/>
</dbReference>
<dbReference type="InterPro" id="IPR036188">
    <property type="entry name" value="FAD/NAD-bd_sf"/>
</dbReference>
<dbReference type="InterPro" id="IPR050631">
    <property type="entry name" value="PheA/TfdB_FAD_monoxygenase"/>
</dbReference>
<dbReference type="NCBIfam" id="NF004827">
    <property type="entry name" value="PRK06183.1-1"/>
    <property type="match status" value="1"/>
</dbReference>
<dbReference type="NCBIfam" id="NF004829">
    <property type="entry name" value="PRK06183.1-3"/>
    <property type="match status" value="1"/>
</dbReference>
<dbReference type="NCBIfam" id="NF004831">
    <property type="entry name" value="PRK06183.1-5"/>
    <property type="match status" value="1"/>
</dbReference>
<dbReference type="PANTHER" id="PTHR43476">
    <property type="entry name" value="3-(3-HYDROXY-PHENYL)PROPIONATE/3-HYDROXYCINNAMIC ACID HYDROXYLASE"/>
    <property type="match status" value="1"/>
</dbReference>
<dbReference type="PANTHER" id="PTHR43476:SF3">
    <property type="entry name" value="FAD-BINDING MONOOXYGENASE"/>
    <property type="match status" value="1"/>
</dbReference>
<dbReference type="Pfam" id="PF01494">
    <property type="entry name" value="FAD_binding_3"/>
    <property type="match status" value="1"/>
</dbReference>
<dbReference type="PRINTS" id="PR00420">
    <property type="entry name" value="RNGMNOXGNASE"/>
</dbReference>
<dbReference type="SUPFAM" id="SSF51905">
    <property type="entry name" value="FAD/NAD(P)-binding domain"/>
    <property type="match status" value="1"/>
</dbReference>
<accession>Q3Z585</accession>
<evidence type="ECO:0000255" key="1">
    <source>
        <dbReference type="HAMAP-Rule" id="MF_01652"/>
    </source>
</evidence>
<sequence>MAIQHPDIQPAVNHSVQVAIAGAGPVGLMMANYLGQMGIDVLVVEKLDKLIDYPRAIGIDDEALRTMQSVGLVENVLPHTTPWHAMRFLTPKGRCFADIQPMTDEFGWPRRNAFIQPQVDAVMLEGLSRFPNVRCLFSRELEAFSQQDDEVTLHLKTAEGQRETIKAQWLVACDGGASFVRRTLNVPFEGKTAPNQWIVVDIANDPLSTPHIYLCCDPVRPYVSAALPHAVRRFEFMVMPGETEEQLREPQNMRKLLSKVLPNPDNVELIRQRVYTHNARLAQRFRIDRVLLAGDAAHIMPVWQGQGYNSGMRDAFNLAWKLALVIQGKARDALLDTYQQERRDHAKAMIDLSVTAGNVLAPPKRWQGTLRDGVSWLLNYLPPVKRYFLEMRFKPMPQYYGGALVREGEAKHSPVGKMFIQPKVTLENGDVTLLDNAIGANFAVIGWGCNPLWGMSDEQIQQWRALGTRFIQVVPEVQIHTAQDNHDGVLHVGDTQGRLRSWFAQHNASLVVMRPDRFVAATAIPQTLGNTLNKLASVMTLTRPDADVSVEKVA</sequence>
<comment type="function">
    <text evidence="1">Catalyzes the insertion of one atom of molecular oxygen into position 2 of the phenyl ring of 3-(3-hydroxyphenyl)propionate (3-HPP) and hydroxycinnamic acid (3HCI).</text>
</comment>
<comment type="catalytic activity">
    <reaction evidence="1">
        <text>3-(3-hydroxyphenyl)propanoate + NADH + O2 + H(+) = 3-(2,3-dihydroxyphenyl)propanoate + NAD(+) + H2O</text>
        <dbReference type="Rhea" id="RHEA:24785"/>
        <dbReference type="ChEBI" id="CHEBI:15377"/>
        <dbReference type="ChEBI" id="CHEBI:15378"/>
        <dbReference type="ChEBI" id="CHEBI:15379"/>
        <dbReference type="ChEBI" id="CHEBI:46951"/>
        <dbReference type="ChEBI" id="CHEBI:57277"/>
        <dbReference type="ChEBI" id="CHEBI:57540"/>
        <dbReference type="ChEBI" id="CHEBI:57945"/>
        <dbReference type="EC" id="1.14.13.127"/>
    </reaction>
</comment>
<comment type="catalytic activity">
    <reaction evidence="1">
        <text>(2E)-3-(3-hydroxyphenyl)prop-2-enoate + NADH + O2 + H(+) = (2E)-3-(2,3-dihydroxyphenyl)prop-2-enoate + NAD(+) + H2O</text>
        <dbReference type="Rhea" id="RHEA:27846"/>
        <dbReference type="ChEBI" id="CHEBI:15377"/>
        <dbReference type="ChEBI" id="CHEBI:15378"/>
        <dbReference type="ChEBI" id="CHEBI:15379"/>
        <dbReference type="ChEBI" id="CHEBI:47928"/>
        <dbReference type="ChEBI" id="CHEBI:57540"/>
        <dbReference type="ChEBI" id="CHEBI:57945"/>
        <dbReference type="ChEBI" id="CHEBI:58642"/>
        <dbReference type="EC" id="1.14.13.127"/>
    </reaction>
</comment>
<comment type="cofactor">
    <cofactor evidence="1">
        <name>FAD</name>
        <dbReference type="ChEBI" id="CHEBI:57692"/>
    </cofactor>
</comment>
<comment type="pathway">
    <text evidence="1">Aromatic compound metabolism; 3-phenylpropanoate degradation.</text>
</comment>
<comment type="similarity">
    <text evidence="1">Belongs to the PheA/TfdB FAD monooxygenase family.</text>
</comment>
<gene>
    <name evidence="1" type="primary">mhpA</name>
    <name type="ordered locus">SSON_0297</name>
</gene>
<feature type="chain" id="PRO_0000337643" description="3-(3-hydroxy-phenyl)propionate/3-hydroxycinnamic acid hydroxylase">
    <location>
        <begin position="1"/>
        <end position="554"/>
    </location>
</feature>
<feature type="binding site" evidence="1">
    <location>
        <begin position="17"/>
        <end position="46"/>
    </location>
    <ligand>
        <name>FAD</name>
        <dbReference type="ChEBI" id="CHEBI:57692"/>
    </ligand>
</feature>
<feature type="binding site" evidence="1">
    <location>
        <begin position="285"/>
        <end position="295"/>
    </location>
    <ligand>
        <name>FAD</name>
        <dbReference type="ChEBI" id="CHEBI:57692"/>
    </ligand>
</feature>
<keyword id="KW-0058">Aromatic hydrocarbons catabolism</keyword>
<keyword id="KW-0274">FAD</keyword>
<keyword id="KW-0285">Flavoprotein</keyword>
<keyword id="KW-0520">NAD</keyword>
<keyword id="KW-0560">Oxidoreductase</keyword>
<keyword id="KW-1185">Reference proteome</keyword>
<protein>
    <recommendedName>
        <fullName evidence="1">3-(3-hydroxy-phenyl)propionate/3-hydroxycinnamic acid hydroxylase</fullName>
        <shortName evidence="1">3-HCI hydroxylase</shortName>
        <shortName evidence="1">3-HPP hydroxylase</shortName>
        <ecNumber evidence="1">1.14.13.127</ecNumber>
    </recommendedName>
</protein>
<reference key="1">
    <citation type="journal article" date="2005" name="Nucleic Acids Res.">
        <title>Genome dynamics and diversity of Shigella species, the etiologic agents of bacillary dysentery.</title>
        <authorList>
            <person name="Yang F."/>
            <person name="Yang J."/>
            <person name="Zhang X."/>
            <person name="Chen L."/>
            <person name="Jiang Y."/>
            <person name="Yan Y."/>
            <person name="Tang X."/>
            <person name="Wang J."/>
            <person name="Xiong Z."/>
            <person name="Dong J."/>
            <person name="Xue Y."/>
            <person name="Zhu Y."/>
            <person name="Xu X."/>
            <person name="Sun L."/>
            <person name="Chen S."/>
            <person name="Nie H."/>
            <person name="Peng J."/>
            <person name="Xu J."/>
            <person name="Wang Y."/>
            <person name="Yuan Z."/>
            <person name="Wen Y."/>
            <person name="Yao Z."/>
            <person name="Shen Y."/>
            <person name="Qiang B."/>
            <person name="Hou Y."/>
            <person name="Yu J."/>
            <person name="Jin Q."/>
        </authorList>
    </citation>
    <scope>NUCLEOTIDE SEQUENCE [LARGE SCALE GENOMIC DNA]</scope>
    <source>
        <strain>Ss046</strain>
    </source>
</reference>